<gene>
    <name evidence="1" type="primary">psaK</name>
    <name type="ordered locus">SYNW1290</name>
</gene>
<keyword id="KW-0472">Membrane</keyword>
<keyword id="KW-0602">Photosynthesis</keyword>
<keyword id="KW-0603">Photosystem I</keyword>
<keyword id="KW-0793">Thylakoid</keyword>
<keyword id="KW-0812">Transmembrane</keyword>
<keyword id="KW-1133">Transmembrane helix</keyword>
<reference key="1">
    <citation type="journal article" date="2003" name="Nature">
        <title>The genome of a motile marine Synechococcus.</title>
        <authorList>
            <person name="Palenik B."/>
            <person name="Brahamsha B."/>
            <person name="Larimer F.W."/>
            <person name="Land M.L."/>
            <person name="Hauser L."/>
            <person name="Chain P."/>
            <person name="Lamerdin J.E."/>
            <person name="Regala W."/>
            <person name="Allen E.E."/>
            <person name="McCarren J."/>
            <person name="Paulsen I.T."/>
            <person name="Dufresne A."/>
            <person name="Partensky F."/>
            <person name="Webb E.A."/>
            <person name="Waterbury J."/>
        </authorList>
    </citation>
    <scope>NUCLEOTIDE SEQUENCE [LARGE SCALE GENOMIC DNA]</scope>
    <source>
        <strain>WH8102</strain>
    </source>
</reference>
<organism>
    <name type="scientific">Parasynechococcus marenigrum (strain WH8102)</name>
    <dbReference type="NCBI Taxonomy" id="84588"/>
    <lineage>
        <taxon>Bacteria</taxon>
        <taxon>Bacillati</taxon>
        <taxon>Cyanobacteriota</taxon>
        <taxon>Cyanophyceae</taxon>
        <taxon>Synechococcales</taxon>
        <taxon>Prochlorococcaceae</taxon>
        <taxon>Parasynechococcus</taxon>
        <taxon>Parasynechococcus marenigrum</taxon>
    </lineage>
</organism>
<dbReference type="EMBL" id="BX569692">
    <property type="protein sequence ID" value="CAE07805.1"/>
    <property type="molecule type" value="Genomic_DNA"/>
</dbReference>
<dbReference type="RefSeq" id="WP_011128154.1">
    <property type="nucleotide sequence ID" value="NC_005070.1"/>
</dbReference>
<dbReference type="SMR" id="Q7U6P8"/>
<dbReference type="STRING" id="84588.SYNW1290"/>
<dbReference type="KEGG" id="syw:SYNW1290"/>
<dbReference type="eggNOG" id="ENOG5032YIH">
    <property type="taxonomic scope" value="Bacteria"/>
</dbReference>
<dbReference type="HOGENOM" id="CLU_160496_0_0_3"/>
<dbReference type="Proteomes" id="UP000001422">
    <property type="component" value="Chromosome"/>
</dbReference>
<dbReference type="GO" id="GO:0009522">
    <property type="term" value="C:photosystem I"/>
    <property type="evidence" value="ECO:0007669"/>
    <property type="project" value="UniProtKB-KW"/>
</dbReference>
<dbReference type="GO" id="GO:0031676">
    <property type="term" value="C:plasma membrane-derived thylakoid membrane"/>
    <property type="evidence" value="ECO:0007669"/>
    <property type="project" value="UniProtKB-SubCell"/>
</dbReference>
<dbReference type="GO" id="GO:0015979">
    <property type="term" value="P:photosynthesis"/>
    <property type="evidence" value="ECO:0007669"/>
    <property type="project" value="UniProtKB-UniRule"/>
</dbReference>
<dbReference type="Gene3D" id="1.20.860.20">
    <property type="entry name" value="Photosystem I PsaK, reaction centre"/>
    <property type="match status" value="1"/>
</dbReference>
<dbReference type="HAMAP" id="MF_00474">
    <property type="entry name" value="PSI_PsaK"/>
    <property type="match status" value="1"/>
</dbReference>
<dbReference type="InterPro" id="IPR035982">
    <property type="entry name" value="PSI_centre_PsaK_sf"/>
</dbReference>
<dbReference type="InterPro" id="IPR000549">
    <property type="entry name" value="PSI_PsaG/PsaK"/>
</dbReference>
<dbReference type="InterPro" id="IPR017492">
    <property type="entry name" value="PSI_PsaK"/>
</dbReference>
<dbReference type="InterPro" id="IPR037101">
    <property type="entry name" value="PSI_PsaK_bact"/>
</dbReference>
<dbReference type="NCBIfam" id="TIGR03049">
    <property type="entry name" value="PS_I_psaK"/>
    <property type="match status" value="1"/>
</dbReference>
<dbReference type="Pfam" id="PF01241">
    <property type="entry name" value="PSI_PSAK"/>
    <property type="match status" value="1"/>
</dbReference>
<dbReference type="SUPFAM" id="SSF81563">
    <property type="entry name" value="Photosystem I reaction center subunit X, PsaK"/>
    <property type="match status" value="1"/>
</dbReference>
<dbReference type="PROSITE" id="PS01026">
    <property type="entry name" value="PHOTOSYSTEM_I_PSAGK"/>
    <property type="match status" value="1"/>
</dbReference>
<name>PSAK_PARMW</name>
<proteinExistence type="inferred from homology"/>
<feature type="chain" id="PRO_0000206218" description="Photosystem I reaction center subunit PsaK">
    <location>
        <begin position="1"/>
        <end position="85"/>
    </location>
</feature>
<feature type="transmembrane region" description="Helical" evidence="1">
    <location>
        <begin position="12"/>
        <end position="34"/>
    </location>
</feature>
<feature type="transmembrane region" description="Helical" evidence="1">
    <location>
        <begin position="54"/>
        <end position="76"/>
    </location>
</feature>
<sequence length="85" mass="8486">MLTPLFAIAPATVTWSPKVALVMIVCNVIAIAVGKATIKHPSEGAKLPNAAFFGGMGHAALLGTTSLGHIIGIGAIQGLAARGVL</sequence>
<accession>Q7U6P8</accession>
<comment type="subcellular location">
    <subcellularLocation>
        <location evidence="1">Cellular thylakoid membrane</location>
        <topology evidence="1">Multi-pass membrane protein</topology>
    </subcellularLocation>
</comment>
<comment type="similarity">
    <text evidence="1">Belongs to the PsaG/PsaK family.</text>
</comment>
<evidence type="ECO:0000255" key="1">
    <source>
        <dbReference type="HAMAP-Rule" id="MF_00474"/>
    </source>
</evidence>
<protein>
    <recommendedName>
        <fullName evidence="1">Photosystem I reaction center subunit PsaK</fullName>
    </recommendedName>
    <alternativeName>
        <fullName evidence="1">Photosystem I subunit X</fullName>
    </alternativeName>
</protein>